<gene>
    <name evidence="1" type="primary">purM</name>
    <name type="ordered locus">ASA_1510</name>
</gene>
<comment type="catalytic activity">
    <reaction evidence="1">
        <text>2-formamido-N(1)-(5-O-phospho-beta-D-ribosyl)acetamidine + ATP = 5-amino-1-(5-phospho-beta-D-ribosyl)imidazole + ADP + phosphate + H(+)</text>
        <dbReference type="Rhea" id="RHEA:23032"/>
        <dbReference type="ChEBI" id="CHEBI:15378"/>
        <dbReference type="ChEBI" id="CHEBI:30616"/>
        <dbReference type="ChEBI" id="CHEBI:43474"/>
        <dbReference type="ChEBI" id="CHEBI:137981"/>
        <dbReference type="ChEBI" id="CHEBI:147287"/>
        <dbReference type="ChEBI" id="CHEBI:456216"/>
        <dbReference type="EC" id="6.3.3.1"/>
    </reaction>
</comment>
<comment type="pathway">
    <text evidence="1">Purine metabolism; IMP biosynthesis via de novo pathway; 5-amino-1-(5-phospho-D-ribosyl)imidazole from N(2)-formyl-N(1)-(5-phospho-D-ribosyl)glycinamide: step 2/2.</text>
</comment>
<comment type="subcellular location">
    <subcellularLocation>
        <location evidence="1">Cytoplasm</location>
    </subcellularLocation>
</comment>
<comment type="similarity">
    <text evidence="1">Belongs to the AIR synthase family.</text>
</comment>
<evidence type="ECO:0000255" key="1">
    <source>
        <dbReference type="HAMAP-Rule" id="MF_00741"/>
    </source>
</evidence>
<organism>
    <name type="scientific">Aeromonas salmonicida (strain A449)</name>
    <dbReference type="NCBI Taxonomy" id="382245"/>
    <lineage>
        <taxon>Bacteria</taxon>
        <taxon>Pseudomonadati</taxon>
        <taxon>Pseudomonadota</taxon>
        <taxon>Gammaproteobacteria</taxon>
        <taxon>Aeromonadales</taxon>
        <taxon>Aeromonadaceae</taxon>
        <taxon>Aeromonas</taxon>
    </lineage>
</organism>
<sequence>MTDKTSLSYKDAGVDIDAGNALVERIKGVSKRTRRPEVLGGLGGFGALCQIPAGYKEPVLVSGTDGVGTKLRLAIDLKKHDTVGIDLVAMCVNDLIVQGAEPLFFLDYYATGKLDVDTAAAVVTGIGVGCEQSGCALVGGETAEMPGMYEGEDYDIAGFCVGVVEKSEIIDGSKVGDGDALIALAASGPHSNGFSLVRKILEVSKADVHQPLGDTTLASALLEPTRIYVKPVLKLIKECEIHALSHITGGGFWENIPRVLPANTQAVIDEQSWQWPAVFSWLQQAGNVTRHEMYRTFNCGVGMIIALPADQLEKALTLLKAEGENAWHIGHIAKAVDGEEQVIIQ</sequence>
<proteinExistence type="inferred from homology"/>
<name>PUR5_AERS4</name>
<accession>A4SL28</accession>
<protein>
    <recommendedName>
        <fullName evidence="1">Phosphoribosylformylglycinamidine cyclo-ligase</fullName>
        <ecNumber evidence="1">6.3.3.1</ecNumber>
    </recommendedName>
    <alternativeName>
        <fullName evidence="1">AIR synthase</fullName>
    </alternativeName>
    <alternativeName>
        <fullName evidence="1">AIRS</fullName>
    </alternativeName>
    <alternativeName>
        <fullName evidence="1">Phosphoribosyl-aminoimidazole synthetase</fullName>
    </alternativeName>
</protein>
<reference key="1">
    <citation type="journal article" date="2008" name="BMC Genomics">
        <title>The genome of Aeromonas salmonicida subsp. salmonicida A449: insights into the evolution of a fish pathogen.</title>
        <authorList>
            <person name="Reith M.E."/>
            <person name="Singh R.K."/>
            <person name="Curtis B."/>
            <person name="Boyd J.M."/>
            <person name="Bouevitch A."/>
            <person name="Kimball J."/>
            <person name="Munholland J."/>
            <person name="Murphy C."/>
            <person name="Sarty D."/>
            <person name="Williams J."/>
            <person name="Nash J.H."/>
            <person name="Johnson S.C."/>
            <person name="Brown L.L."/>
        </authorList>
    </citation>
    <scope>NUCLEOTIDE SEQUENCE [LARGE SCALE GENOMIC DNA]</scope>
    <source>
        <strain>A449</strain>
    </source>
</reference>
<feature type="chain" id="PRO_1000046418" description="Phosphoribosylformylglycinamidine cyclo-ligase">
    <location>
        <begin position="1"/>
        <end position="345"/>
    </location>
</feature>
<keyword id="KW-0067">ATP-binding</keyword>
<keyword id="KW-0963">Cytoplasm</keyword>
<keyword id="KW-0436">Ligase</keyword>
<keyword id="KW-0547">Nucleotide-binding</keyword>
<keyword id="KW-0658">Purine biosynthesis</keyword>
<dbReference type="EC" id="6.3.3.1" evidence="1"/>
<dbReference type="EMBL" id="CP000644">
    <property type="protein sequence ID" value="ABO89600.1"/>
    <property type="molecule type" value="Genomic_DNA"/>
</dbReference>
<dbReference type="RefSeq" id="WP_005320174.1">
    <property type="nucleotide sequence ID" value="NC_009348.1"/>
</dbReference>
<dbReference type="SMR" id="A4SL28"/>
<dbReference type="STRING" id="29491.GCA_000820065_04002"/>
<dbReference type="KEGG" id="asa:ASA_1510"/>
<dbReference type="eggNOG" id="COG0150">
    <property type="taxonomic scope" value="Bacteria"/>
</dbReference>
<dbReference type="HOGENOM" id="CLU_047116_0_0_6"/>
<dbReference type="UniPathway" id="UPA00074">
    <property type="reaction ID" value="UER00129"/>
</dbReference>
<dbReference type="Proteomes" id="UP000000225">
    <property type="component" value="Chromosome"/>
</dbReference>
<dbReference type="GO" id="GO:0005829">
    <property type="term" value="C:cytosol"/>
    <property type="evidence" value="ECO:0007669"/>
    <property type="project" value="TreeGrafter"/>
</dbReference>
<dbReference type="GO" id="GO:0005524">
    <property type="term" value="F:ATP binding"/>
    <property type="evidence" value="ECO:0007669"/>
    <property type="project" value="UniProtKB-KW"/>
</dbReference>
<dbReference type="GO" id="GO:0004637">
    <property type="term" value="F:phosphoribosylamine-glycine ligase activity"/>
    <property type="evidence" value="ECO:0007669"/>
    <property type="project" value="TreeGrafter"/>
</dbReference>
<dbReference type="GO" id="GO:0004641">
    <property type="term" value="F:phosphoribosylformylglycinamidine cyclo-ligase activity"/>
    <property type="evidence" value="ECO:0007669"/>
    <property type="project" value="UniProtKB-UniRule"/>
</dbReference>
<dbReference type="GO" id="GO:0006189">
    <property type="term" value="P:'de novo' IMP biosynthetic process"/>
    <property type="evidence" value="ECO:0007669"/>
    <property type="project" value="UniProtKB-UniRule"/>
</dbReference>
<dbReference type="GO" id="GO:0046084">
    <property type="term" value="P:adenine biosynthetic process"/>
    <property type="evidence" value="ECO:0007669"/>
    <property type="project" value="TreeGrafter"/>
</dbReference>
<dbReference type="CDD" id="cd02196">
    <property type="entry name" value="PurM"/>
    <property type="match status" value="1"/>
</dbReference>
<dbReference type="FunFam" id="3.30.1330.10:FF:000001">
    <property type="entry name" value="Phosphoribosylformylglycinamidine cyclo-ligase"/>
    <property type="match status" value="1"/>
</dbReference>
<dbReference type="FunFam" id="3.90.650.10:FF:000001">
    <property type="entry name" value="Phosphoribosylformylglycinamidine cyclo-ligase"/>
    <property type="match status" value="1"/>
</dbReference>
<dbReference type="Gene3D" id="3.90.650.10">
    <property type="entry name" value="PurM-like C-terminal domain"/>
    <property type="match status" value="1"/>
</dbReference>
<dbReference type="Gene3D" id="3.30.1330.10">
    <property type="entry name" value="PurM-like, N-terminal domain"/>
    <property type="match status" value="1"/>
</dbReference>
<dbReference type="HAMAP" id="MF_00741">
    <property type="entry name" value="AIRS"/>
    <property type="match status" value="1"/>
</dbReference>
<dbReference type="InterPro" id="IPR010918">
    <property type="entry name" value="PurM-like_C_dom"/>
</dbReference>
<dbReference type="InterPro" id="IPR036676">
    <property type="entry name" value="PurM-like_C_sf"/>
</dbReference>
<dbReference type="InterPro" id="IPR016188">
    <property type="entry name" value="PurM-like_N"/>
</dbReference>
<dbReference type="InterPro" id="IPR036921">
    <property type="entry name" value="PurM-like_N_sf"/>
</dbReference>
<dbReference type="InterPro" id="IPR004733">
    <property type="entry name" value="PurM_cligase"/>
</dbReference>
<dbReference type="NCBIfam" id="TIGR00878">
    <property type="entry name" value="purM"/>
    <property type="match status" value="1"/>
</dbReference>
<dbReference type="PANTHER" id="PTHR10520:SF12">
    <property type="entry name" value="TRIFUNCTIONAL PURINE BIOSYNTHETIC PROTEIN ADENOSINE-3"/>
    <property type="match status" value="1"/>
</dbReference>
<dbReference type="PANTHER" id="PTHR10520">
    <property type="entry name" value="TRIFUNCTIONAL PURINE BIOSYNTHETIC PROTEIN ADENOSINE-3-RELATED"/>
    <property type="match status" value="1"/>
</dbReference>
<dbReference type="Pfam" id="PF00586">
    <property type="entry name" value="AIRS"/>
    <property type="match status" value="1"/>
</dbReference>
<dbReference type="Pfam" id="PF02769">
    <property type="entry name" value="AIRS_C"/>
    <property type="match status" value="1"/>
</dbReference>
<dbReference type="SUPFAM" id="SSF56042">
    <property type="entry name" value="PurM C-terminal domain-like"/>
    <property type="match status" value="1"/>
</dbReference>
<dbReference type="SUPFAM" id="SSF55326">
    <property type="entry name" value="PurM N-terminal domain-like"/>
    <property type="match status" value="1"/>
</dbReference>